<organism>
    <name type="scientific">Staphylococcus aureus (strain USA300 / TCH1516)</name>
    <dbReference type="NCBI Taxonomy" id="451516"/>
    <lineage>
        <taxon>Bacteria</taxon>
        <taxon>Bacillati</taxon>
        <taxon>Bacillota</taxon>
        <taxon>Bacilli</taxon>
        <taxon>Bacillales</taxon>
        <taxon>Staphylococcaceae</taxon>
        <taxon>Staphylococcus</taxon>
    </lineage>
</organism>
<evidence type="ECO:0000255" key="1">
    <source>
        <dbReference type="HAMAP-Rule" id="MF_00367"/>
    </source>
</evidence>
<evidence type="ECO:0000255" key="2">
    <source>
        <dbReference type="PROSITE-ProRule" id="PRU01050"/>
    </source>
</evidence>
<keyword id="KW-1003">Cell membrane</keyword>
<keyword id="KW-0963">Cytoplasm</keyword>
<keyword id="KW-0342">GTP-binding</keyword>
<keyword id="KW-0472">Membrane</keyword>
<keyword id="KW-0547">Nucleotide-binding</keyword>
<keyword id="KW-0690">Ribosome biogenesis</keyword>
<keyword id="KW-0694">RNA-binding</keyword>
<keyword id="KW-0699">rRNA-binding</keyword>
<protein>
    <recommendedName>
        <fullName evidence="1">GTPase Era</fullName>
    </recommendedName>
</protein>
<accession>A8Z4A6</accession>
<feature type="chain" id="PRO_1000079746" description="GTPase Era">
    <location>
        <begin position="1"/>
        <end position="299"/>
    </location>
</feature>
<feature type="domain" description="Era-type G" evidence="2">
    <location>
        <begin position="5"/>
        <end position="172"/>
    </location>
</feature>
<feature type="domain" description="KH type-2" evidence="1">
    <location>
        <begin position="203"/>
        <end position="280"/>
    </location>
</feature>
<feature type="region of interest" description="G1" evidence="2">
    <location>
        <begin position="13"/>
        <end position="20"/>
    </location>
</feature>
<feature type="region of interest" description="G2" evidence="2">
    <location>
        <begin position="39"/>
        <end position="43"/>
    </location>
</feature>
<feature type="region of interest" description="G3" evidence="2">
    <location>
        <begin position="60"/>
        <end position="63"/>
    </location>
</feature>
<feature type="region of interest" description="G4" evidence="2">
    <location>
        <begin position="122"/>
        <end position="125"/>
    </location>
</feature>
<feature type="region of interest" description="G5" evidence="2">
    <location>
        <begin position="151"/>
        <end position="153"/>
    </location>
</feature>
<feature type="binding site" evidence="1">
    <location>
        <begin position="13"/>
        <end position="20"/>
    </location>
    <ligand>
        <name>GTP</name>
        <dbReference type="ChEBI" id="CHEBI:37565"/>
    </ligand>
</feature>
<feature type="binding site" evidence="1">
    <location>
        <begin position="60"/>
        <end position="64"/>
    </location>
    <ligand>
        <name>GTP</name>
        <dbReference type="ChEBI" id="CHEBI:37565"/>
    </ligand>
</feature>
<feature type="binding site" evidence="1">
    <location>
        <begin position="122"/>
        <end position="125"/>
    </location>
    <ligand>
        <name>GTP</name>
        <dbReference type="ChEBI" id="CHEBI:37565"/>
    </ligand>
</feature>
<gene>
    <name evidence="1" type="primary">era</name>
    <name type="ordered locus">USA300HOU_1568</name>
</gene>
<comment type="function">
    <text evidence="1">An essential GTPase that binds both GDP and GTP, with rapid nucleotide exchange. Plays a role in 16S rRNA processing and 30S ribosomal subunit biogenesis and possibly also in cell cycle regulation and energy metabolism.</text>
</comment>
<comment type="subunit">
    <text evidence="1">Monomer.</text>
</comment>
<comment type="subcellular location">
    <subcellularLocation>
        <location>Cytoplasm</location>
    </subcellularLocation>
    <subcellularLocation>
        <location evidence="1">Cell membrane</location>
        <topology evidence="1">Peripheral membrane protein</topology>
    </subcellularLocation>
</comment>
<comment type="similarity">
    <text evidence="1 2">Belongs to the TRAFAC class TrmE-Era-EngA-EngB-Septin-like GTPase superfamily. Era GTPase family.</text>
</comment>
<reference key="1">
    <citation type="journal article" date="2007" name="BMC Microbiol.">
        <title>Subtle genetic changes enhance virulence of methicillin resistant and sensitive Staphylococcus aureus.</title>
        <authorList>
            <person name="Highlander S.K."/>
            <person name="Hulten K.G."/>
            <person name="Qin X."/>
            <person name="Jiang H."/>
            <person name="Yerrapragada S."/>
            <person name="Mason E.O. Jr."/>
            <person name="Shang Y."/>
            <person name="Williams T.M."/>
            <person name="Fortunov R.M."/>
            <person name="Liu Y."/>
            <person name="Igboeli O."/>
            <person name="Petrosino J."/>
            <person name="Tirumalai M."/>
            <person name="Uzman A."/>
            <person name="Fox G.E."/>
            <person name="Cardenas A.M."/>
            <person name="Muzny D.M."/>
            <person name="Hemphill L."/>
            <person name="Ding Y."/>
            <person name="Dugan S."/>
            <person name="Blyth P.R."/>
            <person name="Buhay C.J."/>
            <person name="Dinh H.H."/>
            <person name="Hawes A.C."/>
            <person name="Holder M."/>
            <person name="Kovar C.L."/>
            <person name="Lee S.L."/>
            <person name="Liu W."/>
            <person name="Nazareth L.V."/>
            <person name="Wang Q."/>
            <person name="Zhou J."/>
            <person name="Kaplan S.L."/>
            <person name="Weinstock G.M."/>
        </authorList>
    </citation>
    <scope>NUCLEOTIDE SEQUENCE [LARGE SCALE GENOMIC DNA]</scope>
    <source>
        <strain>USA300 / TCH1516</strain>
    </source>
</reference>
<sequence length="299" mass="34329">MTEHKSGFVSIIGRPNVGKSTFVNRVIGHKIAIMSDKAQTTRNKIQGVMTRDDAQIIFIDTPGIHKPKHKLGDYMMKVAKNTLSEIDAIMFMVNANEEIGRGDEYIIEMLKNVKTPVFLVLNKIDLVHPDELMPKIEEYQSYMDFTEIVPISALEGLNVDHFIDVLKTYLPEGPKYYPDDQISDHPEQFVVGEIIREKILHLTSEEIPHAIGVNVDRMVKESEDRVHIEATIYVERDSQKGIVIGKGGKKLKEVGKRARRDIEMLLGSKVYLELWVKVQRDWRNKVNFIRQIGYVEDQD</sequence>
<name>ERA_STAAT</name>
<proteinExistence type="inferred from homology"/>
<dbReference type="EMBL" id="CP000730">
    <property type="protein sequence ID" value="ABX29575.1"/>
    <property type="molecule type" value="Genomic_DNA"/>
</dbReference>
<dbReference type="RefSeq" id="WP_000134765.1">
    <property type="nucleotide sequence ID" value="NC_010079.1"/>
</dbReference>
<dbReference type="SMR" id="A8Z4A6"/>
<dbReference type="KEGG" id="sax:USA300HOU_1568"/>
<dbReference type="HOGENOM" id="CLU_038009_1_0_9"/>
<dbReference type="GO" id="GO:0005829">
    <property type="term" value="C:cytosol"/>
    <property type="evidence" value="ECO:0007669"/>
    <property type="project" value="TreeGrafter"/>
</dbReference>
<dbReference type="GO" id="GO:0005886">
    <property type="term" value="C:plasma membrane"/>
    <property type="evidence" value="ECO:0007669"/>
    <property type="project" value="UniProtKB-SubCell"/>
</dbReference>
<dbReference type="GO" id="GO:0005525">
    <property type="term" value="F:GTP binding"/>
    <property type="evidence" value="ECO:0007669"/>
    <property type="project" value="UniProtKB-UniRule"/>
</dbReference>
<dbReference type="GO" id="GO:0003924">
    <property type="term" value="F:GTPase activity"/>
    <property type="evidence" value="ECO:0007669"/>
    <property type="project" value="UniProtKB-UniRule"/>
</dbReference>
<dbReference type="GO" id="GO:0043024">
    <property type="term" value="F:ribosomal small subunit binding"/>
    <property type="evidence" value="ECO:0007669"/>
    <property type="project" value="TreeGrafter"/>
</dbReference>
<dbReference type="GO" id="GO:0070181">
    <property type="term" value="F:small ribosomal subunit rRNA binding"/>
    <property type="evidence" value="ECO:0007669"/>
    <property type="project" value="UniProtKB-UniRule"/>
</dbReference>
<dbReference type="GO" id="GO:0000028">
    <property type="term" value="P:ribosomal small subunit assembly"/>
    <property type="evidence" value="ECO:0007669"/>
    <property type="project" value="TreeGrafter"/>
</dbReference>
<dbReference type="CDD" id="cd04163">
    <property type="entry name" value="Era"/>
    <property type="match status" value="1"/>
</dbReference>
<dbReference type="CDD" id="cd22534">
    <property type="entry name" value="KH-II_Era"/>
    <property type="match status" value="1"/>
</dbReference>
<dbReference type="FunFam" id="3.30.300.20:FF:000003">
    <property type="entry name" value="GTPase Era"/>
    <property type="match status" value="1"/>
</dbReference>
<dbReference type="FunFam" id="3.40.50.300:FF:000094">
    <property type="entry name" value="GTPase Era"/>
    <property type="match status" value="1"/>
</dbReference>
<dbReference type="Gene3D" id="3.30.300.20">
    <property type="match status" value="1"/>
</dbReference>
<dbReference type="Gene3D" id="3.40.50.300">
    <property type="entry name" value="P-loop containing nucleotide triphosphate hydrolases"/>
    <property type="match status" value="1"/>
</dbReference>
<dbReference type="HAMAP" id="MF_00367">
    <property type="entry name" value="GTPase_Era"/>
    <property type="match status" value="1"/>
</dbReference>
<dbReference type="InterPro" id="IPR030388">
    <property type="entry name" value="G_ERA_dom"/>
</dbReference>
<dbReference type="InterPro" id="IPR006073">
    <property type="entry name" value="GTP-bd"/>
</dbReference>
<dbReference type="InterPro" id="IPR005662">
    <property type="entry name" value="GTPase_Era-like"/>
</dbReference>
<dbReference type="InterPro" id="IPR015946">
    <property type="entry name" value="KH_dom-like_a/b"/>
</dbReference>
<dbReference type="InterPro" id="IPR004044">
    <property type="entry name" value="KH_dom_type_2"/>
</dbReference>
<dbReference type="InterPro" id="IPR009019">
    <property type="entry name" value="KH_sf_prok-type"/>
</dbReference>
<dbReference type="InterPro" id="IPR027417">
    <property type="entry name" value="P-loop_NTPase"/>
</dbReference>
<dbReference type="InterPro" id="IPR005225">
    <property type="entry name" value="Small_GTP-bd"/>
</dbReference>
<dbReference type="NCBIfam" id="TIGR00436">
    <property type="entry name" value="era"/>
    <property type="match status" value="1"/>
</dbReference>
<dbReference type="NCBIfam" id="NF000908">
    <property type="entry name" value="PRK00089.1"/>
    <property type="match status" value="1"/>
</dbReference>
<dbReference type="NCBIfam" id="TIGR00231">
    <property type="entry name" value="small_GTP"/>
    <property type="match status" value="1"/>
</dbReference>
<dbReference type="PANTHER" id="PTHR42698">
    <property type="entry name" value="GTPASE ERA"/>
    <property type="match status" value="1"/>
</dbReference>
<dbReference type="PANTHER" id="PTHR42698:SF1">
    <property type="entry name" value="GTPASE ERA, MITOCHONDRIAL"/>
    <property type="match status" value="1"/>
</dbReference>
<dbReference type="Pfam" id="PF07650">
    <property type="entry name" value="KH_2"/>
    <property type="match status" value="1"/>
</dbReference>
<dbReference type="Pfam" id="PF01926">
    <property type="entry name" value="MMR_HSR1"/>
    <property type="match status" value="1"/>
</dbReference>
<dbReference type="SUPFAM" id="SSF52540">
    <property type="entry name" value="P-loop containing nucleoside triphosphate hydrolases"/>
    <property type="match status" value="1"/>
</dbReference>
<dbReference type="SUPFAM" id="SSF54814">
    <property type="entry name" value="Prokaryotic type KH domain (KH-domain type II)"/>
    <property type="match status" value="1"/>
</dbReference>
<dbReference type="PROSITE" id="PS51713">
    <property type="entry name" value="G_ERA"/>
    <property type="match status" value="1"/>
</dbReference>
<dbReference type="PROSITE" id="PS50823">
    <property type="entry name" value="KH_TYPE_2"/>
    <property type="match status" value="1"/>
</dbReference>